<keyword id="KW-0106">Calcium</keyword>
<keyword id="KW-0903">Direct protein sequencing</keyword>
<keyword id="KW-0348">Hemagglutinin</keyword>
<keyword id="KW-0430">Lectin</keyword>
<keyword id="KW-0464">Manganese</keyword>
<keyword id="KW-0465">Mannose-binding</keyword>
<keyword id="KW-0479">Metal-binding</keyword>
<keyword id="KW-0732">Signal</keyword>
<feature type="signal peptide" evidence="3">
    <location>
        <begin position="1"/>
        <end position="26"/>
    </location>
</feature>
<feature type="chain" id="PRO_5000072171" description="Alpha-methyl-mannoside-specific lectin" evidence="3">
    <location>
        <begin position="27"/>
        <end position="280"/>
    </location>
</feature>
<feature type="binding site" evidence="1">
    <location>
        <position position="114"/>
    </location>
    <ligand>
        <name>a carbohydrate</name>
        <dbReference type="ChEBI" id="CHEBI:16646"/>
    </ligand>
</feature>
<feature type="binding site" evidence="1">
    <location>
        <position position="134"/>
    </location>
    <ligand>
        <name>a carbohydrate</name>
        <dbReference type="ChEBI" id="CHEBI:16646"/>
    </ligand>
</feature>
<feature type="binding site" evidence="1">
    <location>
        <position position="156"/>
    </location>
    <ligand>
        <name>Mn(2+)</name>
        <dbReference type="ChEBI" id="CHEBI:29035"/>
    </ligand>
</feature>
<feature type="binding site" evidence="1">
    <location>
        <position position="158"/>
    </location>
    <ligand>
        <name>Ca(2+)</name>
        <dbReference type="ChEBI" id="CHEBI:29108"/>
    </ligand>
</feature>
<feature type="binding site" evidence="1">
    <location>
        <position position="158"/>
    </location>
    <ligand>
        <name>Mn(2+)</name>
        <dbReference type="ChEBI" id="CHEBI:29035"/>
    </ligand>
</feature>
<feature type="binding site" evidence="1">
    <location>
        <position position="160"/>
    </location>
    <ligand>
        <name>Ca(2+)</name>
        <dbReference type="ChEBI" id="CHEBI:29108"/>
    </ligand>
</feature>
<feature type="binding site" evidence="1">
    <location>
        <position position="165"/>
    </location>
    <ligand>
        <name>a carbohydrate</name>
        <dbReference type="ChEBI" id="CHEBI:16646"/>
    </ligand>
</feature>
<feature type="binding site" evidence="1">
    <location>
        <position position="166"/>
    </location>
    <ligand>
        <name>a carbohydrate</name>
        <dbReference type="ChEBI" id="CHEBI:16646"/>
    </ligand>
</feature>
<feature type="binding site" evidence="1">
    <location>
        <position position="166"/>
    </location>
    <ligand>
        <name>Ca(2+)</name>
        <dbReference type="ChEBI" id="CHEBI:29108"/>
    </ligand>
</feature>
<feature type="binding site" evidence="1">
    <location>
        <position position="169"/>
    </location>
    <ligand>
        <name>Ca(2+)</name>
        <dbReference type="ChEBI" id="CHEBI:29108"/>
    </ligand>
</feature>
<feature type="binding site" evidence="1">
    <location>
        <position position="169"/>
    </location>
    <ligand>
        <name>Mn(2+)</name>
        <dbReference type="ChEBI" id="CHEBI:29035"/>
    </ligand>
</feature>
<feature type="binding site" evidence="1">
    <location>
        <position position="174"/>
    </location>
    <ligand>
        <name>Mn(2+)</name>
        <dbReference type="ChEBI" id="CHEBI:29035"/>
    </ligand>
</feature>
<feature type="binding site" evidence="1">
    <location>
        <position position="248"/>
    </location>
    <ligand>
        <name>a carbohydrate</name>
        <dbReference type="ChEBI" id="CHEBI:16646"/>
    </ligand>
</feature>
<feature type="binding site" evidence="1">
    <location>
        <position position="250"/>
    </location>
    <ligand>
        <name>a carbohydrate</name>
        <dbReference type="ChEBI" id="CHEBI:16646"/>
    </ligand>
</feature>
<dbReference type="EMBL" id="AJ585523">
    <property type="protein sequence ID" value="CAE51929.1"/>
    <property type="molecule type" value="mRNA"/>
</dbReference>
<dbReference type="EMBL" id="AY431029">
    <property type="protein sequence ID" value="AAR06177.1"/>
    <property type="molecule type" value="mRNA"/>
</dbReference>
<dbReference type="SMR" id="Q70DJ5"/>
<dbReference type="GO" id="GO:0044373">
    <property type="term" value="F:cytokinin binding"/>
    <property type="evidence" value="ECO:0000314"/>
    <property type="project" value="UniProtKB"/>
</dbReference>
<dbReference type="GO" id="GO:0005537">
    <property type="term" value="F:D-mannose binding"/>
    <property type="evidence" value="ECO:0007669"/>
    <property type="project" value="UniProtKB-KW"/>
</dbReference>
<dbReference type="GO" id="GO:0046872">
    <property type="term" value="F:metal ion binding"/>
    <property type="evidence" value="ECO:0007669"/>
    <property type="project" value="UniProtKB-KW"/>
</dbReference>
<dbReference type="GO" id="GO:0098609">
    <property type="term" value="P:cell-cell adhesion"/>
    <property type="evidence" value="ECO:0000314"/>
    <property type="project" value="UniProtKB"/>
</dbReference>
<dbReference type="GO" id="GO:0080037">
    <property type="term" value="P:negative regulation of cytokinin-activated signaling pathway"/>
    <property type="evidence" value="ECO:0000314"/>
    <property type="project" value="UniProtKB"/>
</dbReference>
<dbReference type="CDD" id="cd06899">
    <property type="entry name" value="lectin_legume_LecRK_Arcelin_ConA"/>
    <property type="match status" value="1"/>
</dbReference>
<dbReference type="FunFam" id="2.60.120.200:FF:000237">
    <property type="entry name" value="Mannose/glucose-specific lectin"/>
    <property type="match status" value="1"/>
</dbReference>
<dbReference type="Gene3D" id="2.60.120.200">
    <property type="match status" value="1"/>
</dbReference>
<dbReference type="InterPro" id="IPR013320">
    <property type="entry name" value="ConA-like_dom_sf"/>
</dbReference>
<dbReference type="InterPro" id="IPR016363">
    <property type="entry name" value="L-lectin"/>
</dbReference>
<dbReference type="InterPro" id="IPR019825">
    <property type="entry name" value="Lectin_legB_Mn/Ca_BS"/>
</dbReference>
<dbReference type="InterPro" id="IPR001220">
    <property type="entry name" value="Legume_lectin_dom"/>
</dbReference>
<dbReference type="InterPro" id="IPR050258">
    <property type="entry name" value="Leguminous_Lectin"/>
</dbReference>
<dbReference type="PANTHER" id="PTHR32401">
    <property type="entry name" value="CONCANAVALIN A-LIKE LECTIN FAMILY PROTEIN"/>
    <property type="match status" value="1"/>
</dbReference>
<dbReference type="PANTHER" id="PTHR32401:SF47">
    <property type="entry name" value="LEGUME LECTIN DOMAIN-CONTAINING PROTEIN"/>
    <property type="match status" value="1"/>
</dbReference>
<dbReference type="Pfam" id="PF00139">
    <property type="entry name" value="Lectin_legB"/>
    <property type="match status" value="1"/>
</dbReference>
<dbReference type="PIRSF" id="PIRSF002690">
    <property type="entry name" value="L-type_lectin_plant"/>
    <property type="match status" value="1"/>
</dbReference>
<dbReference type="SUPFAM" id="SSF49899">
    <property type="entry name" value="Concanavalin A-like lectins/glucanases"/>
    <property type="match status" value="1"/>
</dbReference>
<dbReference type="PROSITE" id="PS00307">
    <property type="entry name" value="LECTIN_LEGUME_BETA"/>
    <property type="match status" value="1"/>
</dbReference>
<name>LECC1_ARAHY</name>
<sequence>MAISKKILPLLSIATIFLLLLNKAHSLGSLSFGYNNFEQGDERNLILQGDATFSASKGIQLTKVDDNGTPAKSTVGRVLHSTQVRLWEKSTNRLTNFQAQFSFVINSPIDNGADGIAFFIAAPDSEIPKNSAGGTLGLSDPSTAQNPSANQVLAVEFDTFYAQDSNGWDPNYQHIGFDVDPIKSAATTKWERRNGQTLNVLVSYDANSKNLQVTASYPDGQSYQVSYNVDLRDYLPEWGRVGFSAASGQQYQSHGLQSWSFTSTLLYTSPHYLKLGRFMI</sequence>
<reference evidence="6 8" key="1">
    <citation type="journal article" date="2006" name="Plant Mol. Biol.">
        <title>Molecular cloning, expression, and cytokinin (6-benzylaminopurine) antagonist activity of peanut (Arachis hypogaea) lectin SL-I.</title>
        <authorList>
            <person name="Pathak M."/>
            <person name="Singh B."/>
            <person name="Sharma A."/>
            <person name="Agrawal P."/>
            <person name="Pasha S.B."/>
            <person name="Das H.R."/>
            <person name="Das R.H."/>
        </authorList>
    </citation>
    <scope>NUCLEOTIDE SEQUENCE [MRNA]</scope>
    <scope>PROTEIN SEQUENCE OF 27-36; 44-57; 78-89; 194-209; 233-240 AND 259-270</scope>
    <scope>FUNCTION</scope>
    <scope>SUBUNIT</scope>
    <scope>GLYCOSYLATION</scope>
    <source>
        <strain>cv. ICGS-1</strain>
        <tissue evidence="8">Root</tissue>
    </source>
</reference>
<reference evidence="7" key="2">
    <citation type="submission" date="2003-10" db="EMBL/GenBank/DDBJ databases">
        <title>Partial sequence of a cDNA clone having potential to code for a lectin from 6 day-old roots of Arachis hypogaea.</title>
        <authorList>
            <person name="Das R.H."/>
            <person name="Das H.R."/>
            <person name="Pathak M."/>
        </authorList>
    </citation>
    <scope>NUCLEOTIDE SEQUENCE [MRNA]</scope>
    <source>
        <strain>cv. ICGS-1</strain>
        <tissue evidence="7">Root</tissue>
    </source>
</reference>
<reference evidence="6" key="3">
    <citation type="journal article" date="1994" name="Glycoconj. J.">
        <title>Purification of lectins from the stems of peanut plants.</title>
        <authorList>
            <person name="Singh R."/>
            <person name="Das H.R."/>
        </authorList>
    </citation>
    <scope>FUNCTION</scope>
    <scope>GLYCOSYLATION</scope>
    <source>
        <strain evidence="4">cv. JL-24</strain>
        <tissue>Stem</tissue>
    </source>
</reference>
<proteinExistence type="evidence at protein level"/>
<protein>
    <recommendedName>
        <fullName evidence="5">Alpha-methyl-mannoside-specific lectin</fullName>
        <shortName evidence="5">SL-I</shortName>
    </recommendedName>
</protein>
<organism>
    <name type="scientific">Arachis hypogaea</name>
    <name type="common">Peanut</name>
    <dbReference type="NCBI Taxonomy" id="3818"/>
    <lineage>
        <taxon>Eukaryota</taxon>
        <taxon>Viridiplantae</taxon>
        <taxon>Streptophyta</taxon>
        <taxon>Embryophyta</taxon>
        <taxon>Tracheophyta</taxon>
        <taxon>Spermatophyta</taxon>
        <taxon>Magnoliopsida</taxon>
        <taxon>eudicotyledons</taxon>
        <taxon>Gunneridae</taxon>
        <taxon>Pentapetalae</taxon>
        <taxon>rosids</taxon>
        <taxon>fabids</taxon>
        <taxon>Fabales</taxon>
        <taxon>Fabaceae</taxon>
        <taxon>Papilionoideae</taxon>
        <taxon>50 kb inversion clade</taxon>
        <taxon>dalbergioids sensu lato</taxon>
        <taxon>Dalbergieae</taxon>
        <taxon>Pterocarpus clade</taxon>
        <taxon>Arachis</taxon>
    </lineage>
</organism>
<comment type="function">
    <text evidence="3 4">Alpha-methyl-D-mannoside-specific lectin. Has hemagglutinating activity towards rabbit erythrocytes. Binds to cytokinins and significantly inhibits physiological effects of cytokinin activity such as cotyledon expansion and delayed leaf senescence.</text>
</comment>
<comment type="subunit">
    <text evidence="3">Homodimer.</text>
</comment>
<comment type="PTM">
    <text evidence="4 5">Glycosylated.</text>
</comment>
<comment type="miscellaneous">
    <text evidence="3">The hemagglutination activity of native and recombinant SL-I was not inhibited by cellobiose even at 120 mM, however alpha-methylmannoside and 2-alpha-mannose inhibited hemagglutination at 0.38 mM and 0.39 mM respectively.</text>
</comment>
<comment type="similarity">
    <text evidence="2">Belongs to the leguminous lectin family.</text>
</comment>
<accession>Q70DJ5</accession>
<evidence type="ECO:0000250" key="1">
    <source>
        <dbReference type="UniProtKB" id="C0HJX1"/>
    </source>
</evidence>
<evidence type="ECO:0000255" key="2"/>
<evidence type="ECO:0000269" key="3">
    <source>
    </source>
</evidence>
<evidence type="ECO:0000269" key="4">
    <source>
    </source>
</evidence>
<evidence type="ECO:0000303" key="5">
    <source>
    </source>
</evidence>
<evidence type="ECO:0000305" key="6"/>
<evidence type="ECO:0000312" key="7">
    <source>
        <dbReference type="EMBL" id="AAR06177.1"/>
    </source>
</evidence>
<evidence type="ECO:0000312" key="8">
    <source>
        <dbReference type="EMBL" id="CAE51929.1"/>
    </source>
</evidence>